<reference key="1">
    <citation type="journal article" date="2004" name="Proc. Natl. Acad. Sci. U.S.A.">
        <title>Genome sequence of the deep-sea gamma-proteobacterium Idiomarina loihiensis reveals amino acid fermentation as a source of carbon and energy.</title>
        <authorList>
            <person name="Hou S."/>
            <person name="Saw J.H."/>
            <person name="Lee K.S."/>
            <person name="Freitas T.A."/>
            <person name="Belisle C."/>
            <person name="Kawarabayasi Y."/>
            <person name="Donachie S.P."/>
            <person name="Pikina A."/>
            <person name="Galperin M.Y."/>
            <person name="Koonin E.V."/>
            <person name="Makarova K.S."/>
            <person name="Omelchenko M.V."/>
            <person name="Sorokin A."/>
            <person name="Wolf Y.I."/>
            <person name="Li Q.X."/>
            <person name="Keum Y.S."/>
            <person name="Campbell S."/>
            <person name="Denery J."/>
            <person name="Aizawa S."/>
            <person name="Shibata S."/>
            <person name="Malahoff A."/>
            <person name="Alam M."/>
        </authorList>
    </citation>
    <scope>NUCLEOTIDE SEQUENCE [LARGE SCALE GENOMIC DNA]</scope>
    <source>
        <strain>ATCC BAA-735 / DSM 15497 / L2-TR</strain>
    </source>
</reference>
<evidence type="ECO:0000255" key="1">
    <source>
        <dbReference type="HAMAP-Rule" id="MF_00508"/>
    </source>
</evidence>
<evidence type="ECO:0000305" key="2"/>
<comment type="function">
    <text evidence="1">Involved in the binding of tRNA to the ribosomes.</text>
</comment>
<comment type="subunit">
    <text evidence="1">Part of the 30S ribosomal subunit.</text>
</comment>
<comment type="similarity">
    <text evidence="1">Belongs to the universal ribosomal protein uS10 family.</text>
</comment>
<feature type="chain" id="PRO_0000237052" description="Small ribosomal subunit protein uS10">
    <location>
        <begin position="1"/>
        <end position="103"/>
    </location>
</feature>
<gene>
    <name evidence="1" type="primary">rpsJ</name>
    <name type="ordered locus">IL1925</name>
</gene>
<accession>Q5QXY9</accession>
<protein>
    <recommendedName>
        <fullName evidence="1">Small ribosomal subunit protein uS10</fullName>
    </recommendedName>
    <alternativeName>
        <fullName evidence="2">30S ribosomal protein S10</fullName>
    </alternativeName>
</protein>
<sequence length="103" mass="11728">MANQRIRIRLKAFDHRLIDQSTAEIVETAKRTGAQVRGPIPLPTRKERFTVLISPHVNKDARDQYEIRTHKRLIDIMDPTDKTVDALMRLDLAAGVDVQISLG</sequence>
<dbReference type="EMBL" id="AE017340">
    <property type="protein sequence ID" value="AAV82757.1"/>
    <property type="molecule type" value="Genomic_DNA"/>
</dbReference>
<dbReference type="RefSeq" id="WP_008488677.1">
    <property type="nucleotide sequence ID" value="NC_006512.1"/>
</dbReference>
<dbReference type="SMR" id="Q5QXY9"/>
<dbReference type="STRING" id="283942.IL1925"/>
<dbReference type="GeneID" id="41337113"/>
<dbReference type="KEGG" id="ilo:IL1925"/>
<dbReference type="eggNOG" id="COG0051">
    <property type="taxonomic scope" value="Bacteria"/>
</dbReference>
<dbReference type="HOGENOM" id="CLU_122625_1_3_6"/>
<dbReference type="OrthoDB" id="9804464at2"/>
<dbReference type="Proteomes" id="UP000001171">
    <property type="component" value="Chromosome"/>
</dbReference>
<dbReference type="GO" id="GO:1990904">
    <property type="term" value="C:ribonucleoprotein complex"/>
    <property type="evidence" value="ECO:0007669"/>
    <property type="project" value="UniProtKB-KW"/>
</dbReference>
<dbReference type="GO" id="GO:0005840">
    <property type="term" value="C:ribosome"/>
    <property type="evidence" value="ECO:0007669"/>
    <property type="project" value="UniProtKB-KW"/>
</dbReference>
<dbReference type="GO" id="GO:0003735">
    <property type="term" value="F:structural constituent of ribosome"/>
    <property type="evidence" value="ECO:0007669"/>
    <property type="project" value="InterPro"/>
</dbReference>
<dbReference type="GO" id="GO:0000049">
    <property type="term" value="F:tRNA binding"/>
    <property type="evidence" value="ECO:0007669"/>
    <property type="project" value="UniProtKB-UniRule"/>
</dbReference>
<dbReference type="GO" id="GO:0006412">
    <property type="term" value="P:translation"/>
    <property type="evidence" value="ECO:0007669"/>
    <property type="project" value="UniProtKB-UniRule"/>
</dbReference>
<dbReference type="FunFam" id="3.30.70.600:FF:000001">
    <property type="entry name" value="30S ribosomal protein S10"/>
    <property type="match status" value="1"/>
</dbReference>
<dbReference type="Gene3D" id="3.30.70.600">
    <property type="entry name" value="Ribosomal protein S10 domain"/>
    <property type="match status" value="1"/>
</dbReference>
<dbReference type="HAMAP" id="MF_00508">
    <property type="entry name" value="Ribosomal_uS10"/>
    <property type="match status" value="1"/>
</dbReference>
<dbReference type="InterPro" id="IPR001848">
    <property type="entry name" value="Ribosomal_uS10"/>
</dbReference>
<dbReference type="InterPro" id="IPR018268">
    <property type="entry name" value="Ribosomal_uS10_CS"/>
</dbReference>
<dbReference type="InterPro" id="IPR027486">
    <property type="entry name" value="Ribosomal_uS10_dom"/>
</dbReference>
<dbReference type="InterPro" id="IPR036838">
    <property type="entry name" value="Ribosomal_uS10_dom_sf"/>
</dbReference>
<dbReference type="NCBIfam" id="NF001861">
    <property type="entry name" value="PRK00596.1"/>
    <property type="match status" value="1"/>
</dbReference>
<dbReference type="NCBIfam" id="TIGR01049">
    <property type="entry name" value="rpsJ_bact"/>
    <property type="match status" value="1"/>
</dbReference>
<dbReference type="PANTHER" id="PTHR11700">
    <property type="entry name" value="30S RIBOSOMAL PROTEIN S10 FAMILY MEMBER"/>
    <property type="match status" value="1"/>
</dbReference>
<dbReference type="Pfam" id="PF00338">
    <property type="entry name" value="Ribosomal_S10"/>
    <property type="match status" value="1"/>
</dbReference>
<dbReference type="PRINTS" id="PR00971">
    <property type="entry name" value="RIBOSOMALS10"/>
</dbReference>
<dbReference type="SMART" id="SM01403">
    <property type="entry name" value="Ribosomal_S10"/>
    <property type="match status" value="1"/>
</dbReference>
<dbReference type="SUPFAM" id="SSF54999">
    <property type="entry name" value="Ribosomal protein S10"/>
    <property type="match status" value="1"/>
</dbReference>
<dbReference type="PROSITE" id="PS00361">
    <property type="entry name" value="RIBOSOMAL_S10"/>
    <property type="match status" value="1"/>
</dbReference>
<keyword id="KW-1185">Reference proteome</keyword>
<keyword id="KW-0687">Ribonucleoprotein</keyword>
<keyword id="KW-0689">Ribosomal protein</keyword>
<organism>
    <name type="scientific">Idiomarina loihiensis (strain ATCC BAA-735 / DSM 15497 / L2-TR)</name>
    <dbReference type="NCBI Taxonomy" id="283942"/>
    <lineage>
        <taxon>Bacteria</taxon>
        <taxon>Pseudomonadati</taxon>
        <taxon>Pseudomonadota</taxon>
        <taxon>Gammaproteobacteria</taxon>
        <taxon>Alteromonadales</taxon>
        <taxon>Idiomarinaceae</taxon>
        <taxon>Idiomarina</taxon>
    </lineage>
</organism>
<proteinExistence type="inferred from homology"/>
<name>RS10_IDILO</name>